<gene>
    <name type="ORF">MCYG_00144</name>
</gene>
<proteinExistence type="inferred from homology"/>
<reference key="1">
    <citation type="journal article" date="2012" name="MBio">
        <title>Comparative genome analysis of Trichophyton rubrum and related dermatophytes reveals candidate genes involved in infection.</title>
        <authorList>
            <person name="Martinez D.A."/>
            <person name="Oliver B.G."/>
            <person name="Graeser Y."/>
            <person name="Goldberg J.M."/>
            <person name="Li W."/>
            <person name="Martinez-Rossi N.M."/>
            <person name="Monod M."/>
            <person name="Shelest E."/>
            <person name="Barton R.C."/>
            <person name="Birch E."/>
            <person name="Brakhage A.A."/>
            <person name="Chen Z."/>
            <person name="Gurr S.J."/>
            <person name="Heiman D."/>
            <person name="Heitman J."/>
            <person name="Kosti I."/>
            <person name="Rossi A."/>
            <person name="Saif S."/>
            <person name="Samalova M."/>
            <person name="Saunders C.W."/>
            <person name="Shea T."/>
            <person name="Summerbell R.C."/>
            <person name="Xu J."/>
            <person name="Young S."/>
            <person name="Zeng Q."/>
            <person name="Birren B.W."/>
            <person name="Cuomo C.A."/>
            <person name="White T.C."/>
        </authorList>
    </citation>
    <scope>NUCLEOTIDE SEQUENCE [LARGE SCALE GENOMIC DNA]</scope>
    <source>
        <strain>ATCC MYA-4605 / CBS 113480</strain>
    </source>
</reference>
<dbReference type="EC" id="3.4.23.-"/>
<dbReference type="EMBL" id="DS995701">
    <property type="protein sequence ID" value="EEQ27256.1"/>
    <property type="molecule type" value="Genomic_DNA"/>
</dbReference>
<dbReference type="RefSeq" id="XP_002850040.1">
    <property type="nucleotide sequence ID" value="XM_002849994.1"/>
</dbReference>
<dbReference type="SMR" id="C5FBS2"/>
<dbReference type="STRING" id="554155.C5FBS2"/>
<dbReference type="GeneID" id="9230170"/>
<dbReference type="VEuPathDB" id="FungiDB:MCYG_00144"/>
<dbReference type="eggNOG" id="KOG1339">
    <property type="taxonomic scope" value="Eukaryota"/>
</dbReference>
<dbReference type="HOGENOM" id="CLU_013253_0_1_1"/>
<dbReference type="OMA" id="DEEYIGN"/>
<dbReference type="OrthoDB" id="2747330at2759"/>
<dbReference type="Proteomes" id="UP000002035">
    <property type="component" value="Unassembled WGS sequence"/>
</dbReference>
<dbReference type="GO" id="GO:0005576">
    <property type="term" value="C:extracellular region"/>
    <property type="evidence" value="ECO:0007669"/>
    <property type="project" value="UniProtKB-SubCell"/>
</dbReference>
<dbReference type="GO" id="GO:0004190">
    <property type="term" value="F:aspartic-type endopeptidase activity"/>
    <property type="evidence" value="ECO:0007669"/>
    <property type="project" value="UniProtKB-KW"/>
</dbReference>
<dbReference type="GO" id="GO:0006508">
    <property type="term" value="P:proteolysis"/>
    <property type="evidence" value="ECO:0007669"/>
    <property type="project" value="UniProtKB-KW"/>
</dbReference>
<dbReference type="CDD" id="cd06097">
    <property type="entry name" value="Aspergillopepsin_like"/>
    <property type="match status" value="1"/>
</dbReference>
<dbReference type="FunFam" id="2.40.70.10:FF:000024">
    <property type="entry name" value="Endothiapepsin"/>
    <property type="match status" value="1"/>
</dbReference>
<dbReference type="Gene3D" id="2.40.70.10">
    <property type="entry name" value="Acid Proteases"/>
    <property type="match status" value="2"/>
</dbReference>
<dbReference type="InterPro" id="IPR001461">
    <property type="entry name" value="Aspartic_peptidase_A1"/>
</dbReference>
<dbReference type="InterPro" id="IPR001969">
    <property type="entry name" value="Aspartic_peptidase_AS"/>
</dbReference>
<dbReference type="InterPro" id="IPR034163">
    <property type="entry name" value="Aspergillopepsin-like_cat_dom"/>
</dbReference>
<dbReference type="InterPro" id="IPR033121">
    <property type="entry name" value="PEPTIDASE_A1"/>
</dbReference>
<dbReference type="InterPro" id="IPR021109">
    <property type="entry name" value="Peptidase_aspartic_dom_sf"/>
</dbReference>
<dbReference type="PANTHER" id="PTHR47966:SF2">
    <property type="entry name" value="ASPERGILLOPEPSIN-1-RELATED"/>
    <property type="match status" value="1"/>
</dbReference>
<dbReference type="PANTHER" id="PTHR47966">
    <property type="entry name" value="BETA-SITE APP-CLEAVING ENZYME, ISOFORM A-RELATED"/>
    <property type="match status" value="1"/>
</dbReference>
<dbReference type="Pfam" id="PF00026">
    <property type="entry name" value="Asp"/>
    <property type="match status" value="1"/>
</dbReference>
<dbReference type="PRINTS" id="PR00792">
    <property type="entry name" value="PEPSIN"/>
</dbReference>
<dbReference type="SUPFAM" id="SSF50630">
    <property type="entry name" value="Acid proteases"/>
    <property type="match status" value="1"/>
</dbReference>
<dbReference type="PROSITE" id="PS00141">
    <property type="entry name" value="ASP_PROTEASE"/>
    <property type="match status" value="1"/>
</dbReference>
<dbReference type="PROSITE" id="PS51767">
    <property type="entry name" value="PEPTIDASE_A1"/>
    <property type="match status" value="1"/>
</dbReference>
<accession>C5FBS2</accession>
<feature type="signal peptide" evidence="2">
    <location>
        <begin position="1"/>
        <end position="20"/>
    </location>
</feature>
<feature type="propeptide" id="PRO_0000388450" description="Activation peptide" evidence="1">
    <location>
        <begin position="21"/>
        <end position="67"/>
    </location>
</feature>
<feature type="chain" id="PRO_0000388451" description="Aspartic protease pepA">
    <location>
        <begin position="68"/>
        <end position="389"/>
    </location>
</feature>
<feature type="domain" description="Peptidase A1" evidence="4">
    <location>
        <begin position="82"/>
        <end position="386"/>
    </location>
</feature>
<feature type="active site" evidence="4">
    <location>
        <position position="98"/>
    </location>
</feature>
<feature type="active site" evidence="4">
    <location>
        <position position="279"/>
    </location>
</feature>
<feature type="glycosylation site" description="N-linked (GlcNAc...) asparagine" evidence="3">
    <location>
        <position position="257"/>
    </location>
</feature>
<feature type="disulfide bond" evidence="4">
    <location>
        <begin position="315"/>
        <end position="348"/>
    </location>
</feature>
<protein>
    <recommendedName>
        <fullName evidence="5">Aspartic protease pepA</fullName>
        <ecNumber>3.4.23.-</ecNumber>
    </recommendedName>
</protein>
<name>PEPA_ARTOC</name>
<evidence type="ECO:0000250" key="1">
    <source>
        <dbReference type="UniProtKB" id="Q12567"/>
    </source>
</evidence>
<evidence type="ECO:0000255" key="2"/>
<evidence type="ECO:0000255" key="3">
    <source>
        <dbReference type="PROSITE-ProRule" id="PRU00498"/>
    </source>
</evidence>
<evidence type="ECO:0000255" key="4">
    <source>
        <dbReference type="PROSITE-ProRule" id="PRU01103"/>
    </source>
</evidence>
<evidence type="ECO:0000305" key="5"/>
<sequence>MVLINQLGAVLAVCATLTVAAPTKGKARFNVPQVAIPKKMVHHPAVSYARALHKFGMKVPKTVQDAAKGSVPTTPTPSDEQYVTQVTVGEGKLNLDLDTGSGDLQGHNLYKPTSNSKRLNGYSWQISYGDMSSAGGDVFLDTVSIGDVTASSQAVESAKKVSDQFAKDKATDGLMGLSFSVLNTVQPKPQTTFLDTVLSQLEKPLFTCTLKHGEPGSYDFGYIDDAKHSGEITYTQVDNSEGWWGFTADSYSIGGPNTTSFRGDSSGMANGGSISGIADTGTTLMLLSDDVVGEYYGQVQGATNDQQQGGYIFPCDAQLPDFTLSIGGYNAVVPGKFMNYQEIDGSMCFGGLQSSGSSGGPNIFGDVFLKSQFVVWDTQGPRIGFAPQA</sequence>
<organism>
    <name type="scientific">Arthroderma otae (strain ATCC MYA-4605 / CBS 113480)</name>
    <name type="common">Microsporum canis</name>
    <dbReference type="NCBI Taxonomy" id="554155"/>
    <lineage>
        <taxon>Eukaryota</taxon>
        <taxon>Fungi</taxon>
        <taxon>Dikarya</taxon>
        <taxon>Ascomycota</taxon>
        <taxon>Pezizomycotina</taxon>
        <taxon>Eurotiomycetes</taxon>
        <taxon>Eurotiomycetidae</taxon>
        <taxon>Onygenales</taxon>
        <taxon>Arthrodermataceae</taxon>
        <taxon>Microsporum</taxon>
    </lineage>
</organism>
<keyword id="KW-0064">Aspartyl protease</keyword>
<keyword id="KW-1015">Disulfide bond</keyword>
<keyword id="KW-0325">Glycoprotein</keyword>
<keyword id="KW-0378">Hydrolase</keyword>
<keyword id="KW-0645">Protease</keyword>
<keyword id="KW-1185">Reference proteome</keyword>
<keyword id="KW-0964">Secreted</keyword>
<keyword id="KW-0732">Signal</keyword>
<keyword id="KW-0843">Virulence</keyword>
<keyword id="KW-0865">Zymogen</keyword>
<comment type="function">
    <text evidence="1">Secreted aspartic endopeptidase that allows assimilation of proteinaceous substrates. The scissile peptide bond is attacked by a nucleophilic water molecule activated by two aspartic residues in the active site. Shows a broad primary substrate specificity. Favors hydrophobic residues at the P1 and P1' positions.</text>
</comment>
<comment type="subunit">
    <text evidence="1">Monomer.</text>
</comment>
<comment type="subcellular location">
    <subcellularLocation>
        <location evidence="1">Secreted</location>
    </subcellularLocation>
</comment>
<comment type="similarity">
    <text evidence="4">Belongs to the peptidase A1 family.</text>
</comment>